<proteinExistence type="inferred from homology"/>
<protein>
    <recommendedName>
        <fullName evidence="1">Outer-membrane lipoprotein LolB</fullName>
    </recommendedName>
</protein>
<sequence>MHERNYAVFRLLPLASLLLAACSVHTPSGPAKSQTSPEWRAHQQSLSALGRYQTRGAFAYLSSQQKVYALFNWQQTSADRYRLILTNPLGSTEMDLNVQPGVAQLVNNQGKRYVSDDPEVMIQKLAGMSIPLNDLRQWMLGLPGDATDFTLDSRGYLHTLNYSHNGQLWTVTYQGYHDDTVPALPSNLKLRQGDNRIKLKMDSWSL</sequence>
<evidence type="ECO:0000255" key="1">
    <source>
        <dbReference type="HAMAP-Rule" id="MF_00233"/>
    </source>
</evidence>
<feature type="signal peptide" evidence="1">
    <location>
        <begin position="1"/>
        <end position="21"/>
    </location>
</feature>
<feature type="chain" id="PRO_1000021689" description="Outer-membrane lipoprotein LolB">
    <location>
        <begin position="22"/>
        <end position="206"/>
    </location>
</feature>
<feature type="lipid moiety-binding region" description="N-palmitoyl cysteine" evidence="1">
    <location>
        <position position="22"/>
    </location>
</feature>
<feature type="lipid moiety-binding region" description="S-diacylglycerol cysteine" evidence="1">
    <location>
        <position position="22"/>
    </location>
</feature>
<gene>
    <name evidence="1" type="primary">lolB</name>
    <name type="ordered locus">SG1878</name>
</gene>
<reference key="1">
    <citation type="journal article" date="2006" name="Genome Res.">
        <title>Massive genome erosion and functional adaptations provide insights into the symbiotic lifestyle of Sodalis glossinidius in the tsetse host.</title>
        <authorList>
            <person name="Toh H."/>
            <person name="Weiss B.L."/>
            <person name="Perkin S.A.H."/>
            <person name="Yamashita A."/>
            <person name="Oshima K."/>
            <person name="Hattori M."/>
            <person name="Aksoy S."/>
        </authorList>
    </citation>
    <scope>NUCLEOTIDE SEQUENCE [LARGE SCALE GENOMIC DNA]</scope>
    <source>
        <strain>morsitans</strain>
    </source>
</reference>
<dbReference type="EMBL" id="AP008232">
    <property type="protein sequence ID" value="BAE75153.1"/>
    <property type="molecule type" value="Genomic_DNA"/>
</dbReference>
<dbReference type="RefSeq" id="WP_011411822.1">
    <property type="nucleotide sequence ID" value="NC_007712.1"/>
</dbReference>
<dbReference type="SMR" id="Q2NRS2"/>
<dbReference type="STRING" id="343509.SG1878"/>
<dbReference type="KEGG" id="sgl:SG1878"/>
<dbReference type="eggNOG" id="COG3017">
    <property type="taxonomic scope" value="Bacteria"/>
</dbReference>
<dbReference type="HOGENOM" id="CLU_092816_1_1_6"/>
<dbReference type="OrthoDB" id="9797618at2"/>
<dbReference type="BioCyc" id="SGLO343509:SGP1_RS17110-MONOMER"/>
<dbReference type="Proteomes" id="UP000001932">
    <property type="component" value="Chromosome"/>
</dbReference>
<dbReference type="GO" id="GO:0009279">
    <property type="term" value="C:cell outer membrane"/>
    <property type="evidence" value="ECO:0007669"/>
    <property type="project" value="UniProtKB-SubCell"/>
</dbReference>
<dbReference type="GO" id="GO:0044874">
    <property type="term" value="P:lipoprotein localization to outer membrane"/>
    <property type="evidence" value="ECO:0007669"/>
    <property type="project" value="UniProtKB-UniRule"/>
</dbReference>
<dbReference type="GO" id="GO:0015031">
    <property type="term" value="P:protein transport"/>
    <property type="evidence" value="ECO:0007669"/>
    <property type="project" value="UniProtKB-KW"/>
</dbReference>
<dbReference type="CDD" id="cd16326">
    <property type="entry name" value="LolB"/>
    <property type="match status" value="1"/>
</dbReference>
<dbReference type="Gene3D" id="2.50.20.10">
    <property type="entry name" value="Lipoprotein localisation LolA/LolB/LppX"/>
    <property type="match status" value="1"/>
</dbReference>
<dbReference type="HAMAP" id="MF_00233">
    <property type="entry name" value="LolB"/>
    <property type="match status" value="1"/>
</dbReference>
<dbReference type="InterPro" id="IPR029046">
    <property type="entry name" value="LolA/LolB/LppX"/>
</dbReference>
<dbReference type="InterPro" id="IPR004565">
    <property type="entry name" value="OM_lipoprot_LolB"/>
</dbReference>
<dbReference type="NCBIfam" id="TIGR00548">
    <property type="entry name" value="lolB"/>
    <property type="match status" value="1"/>
</dbReference>
<dbReference type="Pfam" id="PF03550">
    <property type="entry name" value="LolB"/>
    <property type="match status" value="1"/>
</dbReference>
<dbReference type="SUPFAM" id="SSF89392">
    <property type="entry name" value="Prokaryotic lipoproteins and lipoprotein localization factors"/>
    <property type="match status" value="1"/>
</dbReference>
<dbReference type="PROSITE" id="PS51257">
    <property type="entry name" value="PROKAR_LIPOPROTEIN"/>
    <property type="match status" value="1"/>
</dbReference>
<name>LOLB_SODGM</name>
<comment type="function">
    <text evidence="1">Plays a critical role in the incorporation of lipoproteins in the outer membrane after they are released by the LolA protein.</text>
</comment>
<comment type="subunit">
    <text evidence="1">Monomer.</text>
</comment>
<comment type="subcellular location">
    <subcellularLocation>
        <location evidence="1">Cell outer membrane</location>
        <topology evidence="1">Lipid-anchor</topology>
    </subcellularLocation>
</comment>
<comment type="similarity">
    <text evidence="1">Belongs to the LolB family.</text>
</comment>
<keyword id="KW-0998">Cell outer membrane</keyword>
<keyword id="KW-0143">Chaperone</keyword>
<keyword id="KW-0449">Lipoprotein</keyword>
<keyword id="KW-0472">Membrane</keyword>
<keyword id="KW-0564">Palmitate</keyword>
<keyword id="KW-0653">Protein transport</keyword>
<keyword id="KW-0732">Signal</keyword>
<keyword id="KW-0813">Transport</keyword>
<organism>
    <name type="scientific">Sodalis glossinidius (strain morsitans)</name>
    <dbReference type="NCBI Taxonomy" id="343509"/>
    <lineage>
        <taxon>Bacteria</taxon>
        <taxon>Pseudomonadati</taxon>
        <taxon>Pseudomonadota</taxon>
        <taxon>Gammaproteobacteria</taxon>
        <taxon>Enterobacterales</taxon>
        <taxon>Bruguierivoracaceae</taxon>
        <taxon>Sodalis</taxon>
    </lineage>
</organism>
<accession>Q2NRS2</accession>